<comment type="function">
    <text evidence="1">Participates actively in the response to hyperosmotic and heat shock by preventing the aggregation of stress-denatured proteins and by disaggregating proteins, also in an autonomous, DnaK-independent fashion. Unfolded proteins bind initially to DnaJ; upon interaction with the DnaJ-bound protein, DnaK hydrolyzes its bound ATP, resulting in the formation of a stable complex. GrpE releases ADP from DnaK; ATP binding to DnaK triggers the release of the substrate protein, thus completing the reaction cycle. Several rounds of ATP-dependent interactions between DnaJ, DnaK and GrpE are required for fully efficient folding. Also involved, together with DnaK and GrpE, in the DNA replication of plasmids through activation of initiation proteins (By similarity).</text>
</comment>
<comment type="cofactor">
    <cofactor evidence="1">
        <name>Zn(2+)</name>
        <dbReference type="ChEBI" id="CHEBI:29105"/>
    </cofactor>
    <text evidence="1">Binds 2 Zn(2+) ions per monomer.</text>
</comment>
<comment type="subunit">
    <text evidence="1">Homodimer.</text>
</comment>
<comment type="subcellular location">
    <subcellularLocation>
        <location evidence="1">Cytoplasm</location>
    </subcellularLocation>
</comment>
<comment type="domain">
    <text evidence="1">The J domain is necessary and sufficient to stimulate DnaK ATPase activity. Zinc center 1 plays an important role in the autonomous, DnaK-independent chaperone activity of DnaJ. Zinc center 2 is essential for interaction with DnaK and for DnaJ activity (By similarity).</text>
</comment>
<comment type="similarity">
    <text evidence="4">Belongs to the DnaJ family.</text>
</comment>
<accession>P73097</accession>
<dbReference type="EMBL" id="BA000022">
    <property type="protein sequence ID" value="BAA17122.1"/>
    <property type="molecule type" value="Genomic_DNA"/>
</dbReference>
<dbReference type="PIR" id="S75208">
    <property type="entry name" value="S75208"/>
</dbReference>
<dbReference type="SMR" id="P73097"/>
<dbReference type="IntAct" id="P73097">
    <property type="interactions" value="3"/>
</dbReference>
<dbReference type="STRING" id="1148.gene:10497983"/>
<dbReference type="PaxDb" id="1148-1652198"/>
<dbReference type="EnsemblBacteria" id="BAA17122">
    <property type="protein sequence ID" value="BAA17122"/>
    <property type="gene ID" value="BAA17122"/>
</dbReference>
<dbReference type="KEGG" id="syn:sll1933"/>
<dbReference type="eggNOG" id="COG0484">
    <property type="taxonomic scope" value="Bacteria"/>
</dbReference>
<dbReference type="InParanoid" id="P73097"/>
<dbReference type="PhylomeDB" id="P73097"/>
<dbReference type="Proteomes" id="UP000001425">
    <property type="component" value="Chromosome"/>
</dbReference>
<dbReference type="GO" id="GO:0005829">
    <property type="term" value="C:cytosol"/>
    <property type="evidence" value="ECO:0000318"/>
    <property type="project" value="GO_Central"/>
</dbReference>
<dbReference type="GO" id="GO:0051087">
    <property type="term" value="F:protein-folding chaperone binding"/>
    <property type="evidence" value="ECO:0000318"/>
    <property type="project" value="GO_Central"/>
</dbReference>
<dbReference type="GO" id="GO:0051082">
    <property type="term" value="F:unfolded protein binding"/>
    <property type="evidence" value="ECO:0000318"/>
    <property type="project" value="GO_Central"/>
</dbReference>
<dbReference type="GO" id="GO:0051085">
    <property type="term" value="P:chaperone cofactor-dependent protein refolding"/>
    <property type="evidence" value="ECO:0000318"/>
    <property type="project" value="GO_Central"/>
</dbReference>
<dbReference type="GO" id="GO:0006260">
    <property type="term" value="P:DNA replication"/>
    <property type="evidence" value="ECO:0007669"/>
    <property type="project" value="UniProtKB-KW"/>
</dbReference>
<dbReference type="CDD" id="cd06257">
    <property type="entry name" value="DnaJ"/>
    <property type="match status" value="1"/>
</dbReference>
<dbReference type="CDD" id="cd10747">
    <property type="entry name" value="DnaJ_C"/>
    <property type="match status" value="1"/>
</dbReference>
<dbReference type="FunFam" id="2.60.260.20:FF:000013">
    <property type="entry name" value="DnaJ subfamily B member 11"/>
    <property type="match status" value="1"/>
</dbReference>
<dbReference type="Gene3D" id="1.10.287.110">
    <property type="entry name" value="DnaJ domain"/>
    <property type="match status" value="1"/>
</dbReference>
<dbReference type="Gene3D" id="2.60.260.20">
    <property type="entry name" value="Urease metallochaperone UreE, N-terminal domain"/>
    <property type="match status" value="2"/>
</dbReference>
<dbReference type="InterPro" id="IPR002939">
    <property type="entry name" value="DnaJ_C"/>
</dbReference>
<dbReference type="InterPro" id="IPR001623">
    <property type="entry name" value="DnaJ_domain"/>
</dbReference>
<dbReference type="InterPro" id="IPR008971">
    <property type="entry name" value="HSP40/DnaJ_pept-bd"/>
</dbReference>
<dbReference type="InterPro" id="IPR036869">
    <property type="entry name" value="J_dom_sf"/>
</dbReference>
<dbReference type="PANTHER" id="PTHR43096">
    <property type="entry name" value="DNAJ HOMOLOG 1, MITOCHONDRIAL-RELATED"/>
    <property type="match status" value="1"/>
</dbReference>
<dbReference type="PANTHER" id="PTHR43096:SF52">
    <property type="entry name" value="DNAJ HOMOLOG 1, MITOCHONDRIAL-RELATED"/>
    <property type="match status" value="1"/>
</dbReference>
<dbReference type="Pfam" id="PF00226">
    <property type="entry name" value="DnaJ"/>
    <property type="match status" value="1"/>
</dbReference>
<dbReference type="Pfam" id="PF01556">
    <property type="entry name" value="DnaJ_C"/>
    <property type="match status" value="1"/>
</dbReference>
<dbReference type="PRINTS" id="PR00625">
    <property type="entry name" value="JDOMAIN"/>
</dbReference>
<dbReference type="SMART" id="SM00271">
    <property type="entry name" value="DnaJ"/>
    <property type="match status" value="1"/>
</dbReference>
<dbReference type="SUPFAM" id="SSF46565">
    <property type="entry name" value="Chaperone J-domain"/>
    <property type="match status" value="1"/>
</dbReference>
<dbReference type="SUPFAM" id="SSF49493">
    <property type="entry name" value="HSP40/DnaJ peptide-binding domain"/>
    <property type="match status" value="2"/>
</dbReference>
<dbReference type="PROSITE" id="PS50076">
    <property type="entry name" value="DNAJ_2"/>
    <property type="match status" value="1"/>
</dbReference>
<sequence length="307" mass="34698">MEQVRNYYQILGVPRNATAEEIKKSFRKLARQYHPDVNPNDKTAEEKFKDINEAYDVLSDETKRRELDSRLFGRFRRPPTSRFSPNSNGGRSPNGTSVNGQVRTPTGRTGTRQPAQSWQDFSETRRTKVVSPARPVPRDVEANLTLPLEKAYRGGKERIRLEDGRSLEVEMPGGMGDGQRIRLKQQGINGGDLYLKINLSPHPLFTLQGTDIACQVPVTPSEAILGGAIEVMTIDGLVKMTVPAGLKNGQKLRLAKKGFPNNQGDRGDQLVEIRVEIPPEPSPEELELYRRIREKETFNPRQKFFDF</sequence>
<evidence type="ECO:0000250" key="1"/>
<evidence type="ECO:0000255" key="2">
    <source>
        <dbReference type="PROSITE-ProRule" id="PRU00286"/>
    </source>
</evidence>
<evidence type="ECO:0000256" key="3">
    <source>
        <dbReference type="SAM" id="MobiDB-lite"/>
    </source>
</evidence>
<evidence type="ECO:0000305" key="4"/>
<feature type="chain" id="PRO_0000070916" description="Chaperone protein DnaJ 2">
    <location>
        <begin position="1"/>
        <end position="307"/>
    </location>
</feature>
<feature type="domain" description="J" evidence="2">
    <location>
        <begin position="6"/>
        <end position="71"/>
    </location>
</feature>
<feature type="region of interest" description="Disordered" evidence="3">
    <location>
        <begin position="69"/>
        <end position="133"/>
    </location>
</feature>
<feature type="compositionally biased region" description="Polar residues" evidence="3">
    <location>
        <begin position="88"/>
        <end position="99"/>
    </location>
</feature>
<feature type="compositionally biased region" description="Low complexity" evidence="3">
    <location>
        <begin position="100"/>
        <end position="114"/>
    </location>
</feature>
<name>DNAJ2_SYNY3</name>
<proteinExistence type="inferred from homology"/>
<gene>
    <name type="primary">dnaJ2</name>
    <name type="ordered locus">sll1933</name>
</gene>
<organism>
    <name type="scientific">Synechocystis sp. (strain ATCC 27184 / PCC 6803 / Kazusa)</name>
    <dbReference type="NCBI Taxonomy" id="1111708"/>
    <lineage>
        <taxon>Bacteria</taxon>
        <taxon>Bacillati</taxon>
        <taxon>Cyanobacteriota</taxon>
        <taxon>Cyanophyceae</taxon>
        <taxon>Synechococcales</taxon>
        <taxon>Merismopediaceae</taxon>
        <taxon>Synechocystis</taxon>
    </lineage>
</organism>
<keyword id="KW-0143">Chaperone</keyword>
<keyword id="KW-0963">Cytoplasm</keyword>
<keyword id="KW-0235">DNA replication</keyword>
<keyword id="KW-1185">Reference proteome</keyword>
<keyword id="KW-0677">Repeat</keyword>
<keyword id="KW-0346">Stress response</keyword>
<protein>
    <recommendedName>
        <fullName>Chaperone protein DnaJ 2</fullName>
    </recommendedName>
</protein>
<reference key="1">
    <citation type="journal article" date="1996" name="DNA Res.">
        <title>Sequence analysis of the genome of the unicellular cyanobacterium Synechocystis sp. strain PCC6803. II. Sequence determination of the entire genome and assignment of potential protein-coding regions.</title>
        <authorList>
            <person name="Kaneko T."/>
            <person name="Sato S."/>
            <person name="Kotani H."/>
            <person name="Tanaka A."/>
            <person name="Asamizu E."/>
            <person name="Nakamura Y."/>
            <person name="Miyajima N."/>
            <person name="Hirosawa M."/>
            <person name="Sugiura M."/>
            <person name="Sasamoto S."/>
            <person name="Kimura T."/>
            <person name="Hosouchi T."/>
            <person name="Matsuno A."/>
            <person name="Muraki A."/>
            <person name="Nakazaki N."/>
            <person name="Naruo K."/>
            <person name="Okumura S."/>
            <person name="Shimpo S."/>
            <person name="Takeuchi C."/>
            <person name="Wada T."/>
            <person name="Watanabe A."/>
            <person name="Yamada M."/>
            <person name="Yasuda M."/>
            <person name="Tabata S."/>
        </authorList>
    </citation>
    <scope>NUCLEOTIDE SEQUENCE [LARGE SCALE GENOMIC DNA]</scope>
    <source>
        <strain>ATCC 27184 / PCC 6803 / Kazusa</strain>
    </source>
</reference>